<feature type="chain" id="PRO_0000345978" description="Extracellular matrix-binding protein EbhA">
    <location>
        <begin position="1"/>
        <end position="6713"/>
    </location>
</feature>
<feature type="transmembrane region" description="Helical" evidence="1">
    <location>
        <begin position="6518"/>
        <end position="6540"/>
    </location>
</feature>
<feature type="domain" description="FIVAR 1">
    <location>
        <begin position="1"/>
        <end position="58"/>
    </location>
</feature>
<feature type="domain" description="FIVAR 2">
    <location>
        <begin position="126"/>
        <end position="184"/>
    </location>
</feature>
<feature type="domain" description="FIVAR 3">
    <location>
        <begin position="252"/>
        <end position="310"/>
    </location>
</feature>
<feature type="domain" description="FIVAR 4">
    <location>
        <begin position="378"/>
        <end position="436"/>
    </location>
</feature>
<feature type="domain" description="FIVAR 5">
    <location>
        <begin position="504"/>
        <end position="562"/>
    </location>
</feature>
<feature type="domain" description="FIVAR 6">
    <location>
        <begin position="630"/>
        <end position="688"/>
    </location>
</feature>
<feature type="domain" description="FIVAR 7">
    <location>
        <begin position="756"/>
        <end position="814"/>
    </location>
</feature>
<feature type="domain" description="FIVAR 8">
    <location>
        <begin position="882"/>
        <end position="940"/>
    </location>
</feature>
<feature type="domain" description="FIVAR 9">
    <location>
        <begin position="1008"/>
        <end position="1066"/>
    </location>
</feature>
<feature type="domain" description="FIVAR 10">
    <location>
        <begin position="1134"/>
        <end position="1192"/>
    </location>
</feature>
<feature type="domain" description="FIVAR 11">
    <location>
        <begin position="1260"/>
        <end position="1318"/>
    </location>
</feature>
<feature type="domain" description="FIVAR 12">
    <location>
        <begin position="1386"/>
        <end position="1444"/>
    </location>
</feature>
<feature type="domain" description="FIVAR 13">
    <location>
        <begin position="1512"/>
        <end position="1570"/>
    </location>
</feature>
<feature type="domain" description="FIVAR 14">
    <location>
        <begin position="1638"/>
        <end position="1696"/>
    </location>
</feature>
<feature type="domain" description="FIVAR 15">
    <location>
        <begin position="1764"/>
        <end position="1822"/>
    </location>
</feature>
<feature type="domain" description="FIVAR 16">
    <location>
        <begin position="1890"/>
        <end position="1948"/>
    </location>
</feature>
<feature type="domain" description="FIVAR 17">
    <location>
        <begin position="2142"/>
        <end position="2200"/>
    </location>
</feature>
<feature type="domain" description="FIVAR 18">
    <location>
        <begin position="2268"/>
        <end position="2325"/>
    </location>
</feature>
<feature type="domain" description="FIVAR 19">
    <location>
        <begin position="2393"/>
        <end position="2451"/>
    </location>
</feature>
<feature type="domain" description="FIVAR 20">
    <location>
        <begin position="2519"/>
        <end position="2577"/>
    </location>
</feature>
<feature type="domain" description="FIVAR 21">
    <location>
        <begin position="2645"/>
        <end position="2703"/>
    </location>
</feature>
<feature type="domain" description="FIVAR 22">
    <location>
        <begin position="2771"/>
        <end position="2829"/>
    </location>
</feature>
<feature type="domain" description="FIVAR 23">
    <location>
        <begin position="2897"/>
        <end position="2955"/>
    </location>
</feature>
<feature type="domain" description="FIVAR 24">
    <location>
        <begin position="3023"/>
        <end position="3081"/>
    </location>
</feature>
<feature type="domain" description="FIVAR 25">
    <location>
        <begin position="3149"/>
        <end position="3207"/>
    </location>
</feature>
<feature type="domain" description="FIVAR 26">
    <location>
        <begin position="3275"/>
        <end position="3333"/>
    </location>
</feature>
<feature type="domain" description="FIVAR 27">
    <location>
        <begin position="3401"/>
        <end position="3459"/>
    </location>
</feature>
<feature type="domain" description="FIVAR 28">
    <location>
        <begin position="3527"/>
        <end position="3585"/>
    </location>
</feature>
<feature type="domain" description="FIVAR 29">
    <location>
        <begin position="3653"/>
        <end position="3711"/>
    </location>
</feature>
<feature type="domain" description="FIVAR 30">
    <location>
        <begin position="3779"/>
        <end position="3837"/>
    </location>
</feature>
<feature type="domain" description="FIVAR 31">
    <location>
        <begin position="3905"/>
        <end position="3963"/>
    </location>
</feature>
<feature type="domain" description="FIVAR 32">
    <location>
        <begin position="4031"/>
        <end position="4089"/>
    </location>
</feature>
<feature type="domain" description="FIVAR 33">
    <location>
        <begin position="4157"/>
        <end position="4218"/>
    </location>
</feature>
<feature type="domain" description="FIVAR 34">
    <location>
        <begin position="4283"/>
        <end position="4341"/>
    </location>
</feature>
<feature type="domain" description="FIVAR 35">
    <location>
        <begin position="4409"/>
        <end position="4467"/>
    </location>
</feature>
<feature type="domain" description="FIVAR 36">
    <location>
        <begin position="4535"/>
        <end position="4592"/>
    </location>
</feature>
<feature type="domain" description="FIVAR 37">
    <location>
        <begin position="4660"/>
        <end position="4718"/>
    </location>
</feature>
<feature type="domain" description="FIVAR 38">
    <location>
        <begin position="4786"/>
        <end position="4844"/>
    </location>
</feature>
<feature type="domain" description="FIVAR 39">
    <location>
        <begin position="4912"/>
        <end position="4970"/>
    </location>
</feature>
<feature type="domain" description="FIVAR 40">
    <location>
        <begin position="5038"/>
        <end position="5096"/>
    </location>
</feature>
<feature type="domain" description="FIVAR 41">
    <location>
        <begin position="5164"/>
        <end position="5222"/>
    </location>
</feature>
<feature type="domain" description="FIVAR 42">
    <location>
        <begin position="5290"/>
        <end position="5344"/>
    </location>
</feature>
<feature type="domain" description="FIVAR 43">
    <location>
        <begin position="5412"/>
        <end position="5471"/>
    </location>
</feature>
<feature type="domain" description="FIVAR 44">
    <location>
        <begin position="5666"/>
        <end position="5722"/>
    </location>
</feature>
<feature type="region of interest" description="Disordered" evidence="2">
    <location>
        <begin position="3159"/>
        <end position="3178"/>
    </location>
</feature>
<feature type="region of interest" description="Disordered" evidence="2">
    <location>
        <begin position="6616"/>
        <end position="6713"/>
    </location>
</feature>
<feature type="compositionally biased region" description="Polar residues" evidence="2">
    <location>
        <begin position="3159"/>
        <end position="3173"/>
    </location>
</feature>
<feature type="compositionally biased region" description="Basic and acidic residues" evidence="2">
    <location>
        <begin position="6631"/>
        <end position="6641"/>
    </location>
</feature>
<feature type="compositionally biased region" description="Basic and acidic residues" evidence="2">
    <location>
        <begin position="6680"/>
        <end position="6690"/>
    </location>
</feature>
<feature type="compositionally biased region" description="Basic residues" evidence="2">
    <location>
        <begin position="6695"/>
        <end position="6713"/>
    </location>
</feature>
<reference key="1">
    <citation type="journal article" date="2001" name="Lancet">
        <title>Whole genome sequencing of meticillin-resistant Staphylococcus aureus.</title>
        <authorList>
            <person name="Kuroda M."/>
            <person name="Ohta T."/>
            <person name="Uchiyama I."/>
            <person name="Baba T."/>
            <person name="Yuzawa H."/>
            <person name="Kobayashi I."/>
            <person name="Cui L."/>
            <person name="Oguchi A."/>
            <person name="Aoki K."/>
            <person name="Nagai Y."/>
            <person name="Lian J.-Q."/>
            <person name="Ito T."/>
            <person name="Kanamori M."/>
            <person name="Matsumaru H."/>
            <person name="Maruyama A."/>
            <person name="Murakami H."/>
            <person name="Hosoyama A."/>
            <person name="Mizutani-Ui Y."/>
            <person name="Takahashi N.K."/>
            <person name="Sawano T."/>
            <person name="Inoue R."/>
            <person name="Kaito C."/>
            <person name="Sekimizu K."/>
            <person name="Hirakawa H."/>
            <person name="Kuhara S."/>
            <person name="Goto S."/>
            <person name="Yabuzaki J."/>
            <person name="Kanehisa M."/>
            <person name="Yamashita A."/>
            <person name="Oshima K."/>
            <person name="Furuya K."/>
            <person name="Yoshino C."/>
            <person name="Shiba T."/>
            <person name="Hattori M."/>
            <person name="Ogasawara N."/>
            <person name="Hayashi H."/>
            <person name="Hiramatsu K."/>
        </authorList>
    </citation>
    <scope>NUCLEOTIDE SEQUENCE [LARGE SCALE GENOMIC DNA]</scope>
    <source>
        <strain>N315</strain>
    </source>
</reference>
<name>EBHA_STAAN</name>
<comment type="subcellular location">
    <subcellularLocation>
        <location evidence="3">Cell membrane</location>
        <topology evidence="3">Single-pass membrane protein</topology>
    </subcellularLocation>
</comment>
<comment type="caution">
    <text evidence="3">In strains Mu3, Mu50, N315 and Newman, ebh is divided into two ORFs, ebhA and ebhB, which correspond to the C-terminal and N-terminal parts of the full gene, respectively.</text>
</comment>
<sequence length="6713" mass="722343">MGNLQTAINDKSGTLASQNFLDADEQKRNAYNQAISAAETILNKQTGPNTAKTAVEQALNNVNSAKHALNGTQNLNNAKQAAITAINGASDLNQKQKDALKAQANGAQRVSNANDVQRNATELNTAMGQLQHAIADKTNTLASSKYVNADSTKQNAYTTKVTNAEHIISGTPTVVTTPSEVTAAANQVNSAKQELNGDERLRVAKQNANTAIDALTQLNTPQKAKLKEQVGQANRLEDVQSVQTNGQSLNNAMKGLRDSIANETTVKASQNYTDASPNNQSTYNSAVSNAKGIINQTNNPTMDTSAITQATTQVNNAKNGLNGAENLRNAQNTAKQNLNTLSHLTNNQKSAISSQIDRAGHVSEVTAAKNAATELNAQMGNLEQAIHDQNTVKQGVNFTDADKAKRDAYTNAVSRAETILNKTQGANTSKQDVEAAIQNVTSAKNALNGDQNVTNAKNAAKNALNNLTSINNAQKRDLTTKIDQATTVAGVEAVSNTGTQLNTAMANLQNGINDKANTLASENYHDADSDKKTAYTQAVTNAENILNKNSGSNLDKAAVENALSQVTNAKGALNGNHNLEQAKSNANTTINGLQHLTTAQKDKLKQQVQQAQNVAGVDTVKSSANTLNGAMGTLRNSIQDNTATKNGQNYLDATERNKTNYNNAVDSANGVINATSNPNMDANAINQIATQVTSTKNALDGTHNLTQAKQTATNAIDGATNLNKAQKDALKAQVTSAQRVANVTSIQQTANELNTAMGQLQHGIDDENATKQTQKYRDAEQSKKTAYDQAVAAAKAILNKQTGSNSDKAAVDRALQQVTSTKDALNGDAKLAEAKAAARQNLGTLNHITNAQRTALEGQINQATTVDGVNTVKTNANTLDGAMNSLQGAINDKDATLRNQNYLDADESKRNAYTQAVTAAEGILNKQTGGNTSKADVDNALNAVTRAKAALNGAENLRNAKTSATNTINGLPNLTQLQKDNLKHQVEQAQNVVGVNGVKDKGNTLNTAMGALRTSIQNDNTTKTSQNYLDASDSNKNNYNTAVNNANGVINATNNPNMDANAINDMANQVNTTKAALNGAQNLAQAKTNATNTINNAQDLNQKQKDALKTQVNNAQRVSDANNVQHTATELNGAMTALKAAIADKERTKASGNYVNADQEKRQAYDSKVTNAENIINGTPNATLTVNDVNSAASQVNAAKTALNGDNNLRVAKEHANNTIDGLAQLNNVQKAKLKEQVQSATTLDGVQTVKNSSQTLNTAMKGLRDSIANEATIKAGQNYTDASPNNRNEYDSAVTAAKAIINQTSNPTMEPNTITQATSQVTTKEHALNGAQNLAQAKTTAKNNLNNLTSINNAQKDALTRNIDGATTVAGVNQETAKATELNNAMHSLQNGINDETQTKQTQKYLDAEPSKKSAYDQAVNAAKAILTKASGQNVDKAAVEQALQNVNSTKTALNGDAKLNEAKAAAKQTLGTLTHINNAQRNALDNEITQATNVEGVNTVKAKAQQLDGAMGQLETSIRDKDTTLQSQNYQDADDAKRTAYSQAVNAAATILNKTAGGNTPKADVERAMQAVTQANTALNGIQNLERAKQAANTAITNASDLNTKQKEALKAQVTSAGRVSAANGVEHTATELNTAMTALKRAIADKADTKASGNYVNADANKRQAYDEKVTAAEHIVSGTPTPTLTPSDVTNAATQVTNAKTQLNGNHNLEVAKQNANTAIDGLTSLNGPQKAKLKEQVGQATTLPNVQTVRDNAQTLNTAMKGLRDSIANEATIKAGQNYTDASQNKQNDYNNAVTAAKAIIGQTTSPSMIAQEINQAKDQVTAKQQALNGQENLRTAQTNAKQHLNGLSDLTNAQKDAAKRQIEGATHVNEVTQAQNNADALNTAMTNLKNGIQDQNTIKQGVNFTDADEAKRNAYTNAVTQAEQILNKAQGPNTAKDGVETALQNVQRAKNELNGNQNVANAKTTAKNALNNLTSINNAQKAALKSQIEGATTVAGVNQVSTMASELNTAMSNLQRGINDEAATKAAQKYTEADRDKQTAYNDAVTAAKTLLDKTAGSNDNKVAVEQALQRVNTAKTALNGDARLNEAKNTAKQQLATMSHLTNAQKANLTEQIERGTTVAGVQGIQANAGTLNQAMNQLRQSIASKDATKSSEDYQDANADLQNAYNDAVTNAEGIISATNNPEMNPDTINQKASQVNSAKSALNGDEKLAAAKQTAKSDIGRLTDLNNAQRTAANAEVDQAPNLAAVTAAKNKATSLNTAMGNLKHALAEKDNTKRSVNYTDADQPKQQAYDTAVTQAEAITNANGSNANETQVQAALNQLNQAKNDLNGDNKVAQAKETAKRALASYSNLNNAQSTAATSQIDNATTVADVTAAQNTANELNTAMGQLQNGINDQNTVKQQVNFTDADQGKKDAYTNAVTNAQGILDKANGQNMTKAQVEAALNQVTTAKNALNGDANVRQAKSDAKANLGTLTHLNNAQKQDLTSQIEGATTVNGVNSVKTKAQDLDGAMQRLESAIANKDQTKASENYIDADPTKKTAFDNAITQAESYLNKDHGTNKDKQAVEQAIQSVTSTENALNGDANLQCAKTEATQAIDNLTQLNTPQKTALKQQVNAAQRVSGVTDLKNSATSLNNAMDQLKQAIGDHDTIVAGGNYTNASPDKQGAYTDAYNAAKNIVNGSPNVITNAADVTAATQRVNNAETSLNGDTNLATAKQQAKDALRQMTHLSDAQKQSITGQIDSATQVTGVQSVKDNATNLDNAMNQLRNSIANKDEVKASQPYVDADTDKQNAYNTAVTSAENIINATSQPTLDPSAVTQAANQVNTNKTALNGAQNLANKKQETTANINRLSHLNNAQKQDLNTQVTNAPNISTVNQVKTKAEQLDQAMERLINGIQDKDQVKQSVNFTDADPEKQTAYNNAVTAAENIINQANGTNANQSQVEAALSTVTTTKQALNGDRKVTDAKNNANQTLSTLDNLNNAQKGAVTGNINQAHTVAEVTQAIQTAQELNTAMGNLKNSLNDKDTTLGSQNFADADPEKKNAYNEAVRNAENILNKSTGTNVPKDQVEAAMNQVNTTKAALNGTQNLEKAKQHANTAIDGLSHLTNAQKEALKQLVQQSTTVAEAQGNEQKANNVDAAMDKLRQSIADNATTKQNQNYTDASPNKKDAYNNAVTTAQGIIDQTTNPSLDPTVINQAAGQVSTSKNALNGNENLEAAKQQATQSLGSLDNLNNAQKQAVTNQINGAHTVDEANQIKQNAQNLNTAMGNLKQAIADKDATKATVNFTDADQAKQQAYNTAVTNAENIISKANGGNATQTEVEQAIQQVNAAKQALNGNANVQHAKDEATALINNSNDLNQAQKDALKQQVQNATTVAGVNNVKQTAQELNNAMTQLKQGIADKEQTKADGNFVNADSDKQNAYNQAVAKAEALISGTPDVVVTPSEITAALNKVTQAKNDLNGNTNLATAKQNVQHAIDQLPNLNQAQRDEYSKQITQATLVPNVNAIQQAATTLNDAMTQLKQGIANKAQIKGSENYHDADTDKQTAYDNAVTKAEELLKQTTNPTMDPNTIQQALTKVNDTNQALNGNQKLADAKQDAKTTLGTLDHLNDAQKQALTTQVEQAPDIATVNNVKQNAQNLNNAMTNLNNALQDKTETLNSINFTDADQAKKDDYTNAVSHAEGILSKANGSNASQTEVEQAMQRVNEAKQALNGNDNVQRAKDAAKQVITNANDLNQAQKDALKQQVDAAQTVANVNTIKQTAQDLNQAMTQLKQGIADKDQTKANGNFVNADTDKQNAYNNAVAHAEQIISGTPNANVDPQQVAQALQQVNQAKGDLNGNHNLQVAKDNANTAIDQLPNLNQPQKTALKDQVSHAELVTGVNAIKQNADALNNAMGTLKQQIQANSQVPQSVDFTQADQDKQQAYNNAANQAQQIANGTPTPVLAPDTVTKAVTTMNQAKDALNGDEKLAQAKQDALANLDTLRDLNQPQRDALRNQINQAQALATVEQTKQNAQNVNTAMGNLKQGIANKDTVKASENYHDADVDKQTAYTNAVSQAEGIINQTTNPTLNPDDITRALTQVTDAKNSLNGEAKLATEKQNAKDAVSGMTHLNDAQKQALKGQIDQSPEIATVNQVKQTATSLDQAMDQLSQAINDKDQILADGNYLNADPDKQNAYKQAVAKAEALLNKQSGTNEVQAQVESITNEVNAAKQALNGNDNLANAKQQAKQQLANLTHLNDAQKQSFESQITQAPLVTDVTTINQKAQTLDHAMELLRNSVADNQTTLASEDYHDATAQRQNDYNKAVTAANNIINQTTSPTMNPDDVNGATTQVNNTKVALDGDENLAAAKQQANNRLDQLDHLNNAQKQQLQSQITQSSDIAAVNGHKQTAESLNTAMGNLINAIADHQAVEQRGNFINADTDKQTAYNTAVNEAAAMINKQTGQNANQTEVEQAITKVQTTLQALNGDHNLQVAKTNATQAIDVLTSLNDPQKTALKDQVTAATLVTAVHQIEQNANTLNQAMHGLRQSIQDNAATKANSKYINEDQPEQQNYDQAVQAANNIINEQTATLDNNAINQVAATVNTTKAALHGDVKLQNDKDHAKQTVSQLAHLNNAQKHMEDTLIDSETTRTAVKQDLTEVQALDQLMDALQQSIADKDATRASSAYVNAEPNKKQAYDEAVQNAESIIAGLNNPTINKGNVSSATQAVISSKNALDGVERLAQDKQTAGNSLNHLDQLTPAQQQALENQINNATTRDKVAEIIAQAQALNEAMKALKESIKDQPQTEASSKFINEDQAQKDAYTQAVQHAKDLINKTTDPTLAKSIIDQATQAVTDAKNNLHGDQKLAQDKQRATETLNNLSNLNTPQRQALENQINNAATRGEVAQKLTEAQALNQAMEALRNSIQDQQQTESGSKFINEDKPQKDAYQAAVQNAKDLINQTGNPTLDKAQVEQLTHAFKQAKDNLHGDQKLADDKQHAVTDLNQLNGLNNPQRQALESQINNAATRGEVAQKLAEAKALDQAMQALRNSIQDQQQTEAGSKFINEDKPQKDAYQAAVQNAKDLINQTGNPTLDKSQVEQLTQAVTTAKDNLHGDQKLARDQQQAVTTVNALPNLNHAQQQTLTDAINAAPTRTEVAQHVQTATELDHAMETLKNKVDQVNTDKAQPNYTEASTDKKEAVDQALQAAQSITDPTNGSNANKDAVEQALTKLQEKVNELNGNERVAEAKTQAKQTIDQLTHLNADQIATAKQNIDQATKLQPIAELVDQATQLNQSMDQLQQAVNEHANVEQTIDYTQADSDKQKAYKQAIADAENVLKQNANKQQVDQALQNILNAKQALNGDERVALAKTNGKHDIDQLNALNNAQQDGFKGRIDQSNDLNQIQQIVDEAKALNRAMDQLSQEITGNEGRTKGSTNYVNADTQVKQVYDEAVDKAKQALDKSSGQNLTAEQVIKLNDAVTAAKKALNGEERLNNRKAEALQRLDQLTHLNNAQRQLAIQQINNAETLNKASRAINRATKLDNAMGAVQQYIDEQHLGVISSTNYINADDNLKANYDNAIANAAHELDKVQGNAIAKAEAEQLKQNIIDAQNALNGDQNLANAKDKANAFVNSLNGLNQQQQDLAHKAINNADTVSDVTDIVNNQIDLNDAMETLKHLVDNEIPNAEQTVNYQNADDNAKTNFDDAKRLANTLLNSDNTNVNDINGAIQAVNDAIHNLNGDQRLQDAKDKAIQSINQALANKLKEIEASNATDQDKLIAKNKAEELANSIINNINKATSNQAVSQVQTAGNHAIEQVHANEIPKAKIDANKDVDKQVQALIDEIDRNPNLTDKEKQALKDRINQILQQGHNDINNALTKEEIEQAKAQLAQALQDIKDLVKAKEDAKQDVDKQVQALIDEIDQNPNLTDKEKQALKDRINQILQQGHNGINNAMTKEEIEQAKAQLAQALKEIKDLVKAKENAKQDVDKQVQALIDEIDQNPNLTDKEKQALKDRINQILQQGHNDINNAMTKEEIEQAKAQLAQALQDIKDLVKAKEDAKNAIKALANAKRDQINSNPDLTPEQKAKALKEIDEAEKRALQNVENAQTIDQLNRGLNLGLDDIRNTHVWEVDEQPAVNEIFEATPEQILVNGELIVHRDDIITEQDILAHINLIDQLSAEVIDTPSTATISDSLTAKVEVTLLDGSKVIVNVPVKVVEKELSVVKQQAIESIENAAQQKIDEINNSVTLTLEQKEAAIAEVNKLKQQAIDHVNNAPDVHSVEEIQQQEQAYIEQFNPEQFTIEQAKSNAIKSIEDAIQHMIDEIKARTDLTDKEKQEAIAKLNQLKEQAIQAIQRAQSISEITEQLEQFKAQMKAANPTAKELAKRKQEAISRIKDFSNEKINSIRNSEIGTADEKQAAMNQINEIVLETIRDINNAHTLQQVEAALNNGIARISAVQIVISDRAKQSSSTGNESNSHLTIGYGTANHPFNSSTIGHKKKLDEDDDIDPLHMRHFSNNFGNVIKNAIGVVGISGLLASFWFFIAKRRRKEDEEEELEIRDNNKDSIKETLDDTKHLPLLFAKRRRKEDEEDVTVEEKDSLNNGESLDKVKHTPFFLPKRRRKEDEEDVEVTNENTDEKVLKDNEHSPLLFAKRRKDKEEDVETTTSIESKDEDVPLLLAKKKNQKDNQSKDKKSASKNTSKKVAAKKKKKKSKKNKK</sequence>
<dbReference type="EMBL" id="BA000018">
    <property type="protein sequence ID" value="BAB42527.1"/>
    <property type="molecule type" value="Genomic_DNA"/>
</dbReference>
<dbReference type="PIR" id="B89921">
    <property type="entry name" value="B89921"/>
</dbReference>
<dbReference type="SMR" id="Q99U54"/>
<dbReference type="EnsemblBacteria" id="BAB42527">
    <property type="protein sequence ID" value="BAB42527"/>
    <property type="gene ID" value="BAB42527"/>
</dbReference>
<dbReference type="KEGG" id="sau:SA1267"/>
<dbReference type="HOGENOM" id="CLU_000041_0_0_9"/>
<dbReference type="GO" id="GO:0005886">
    <property type="term" value="C:plasma membrane"/>
    <property type="evidence" value="ECO:0007669"/>
    <property type="project" value="UniProtKB-SubCell"/>
</dbReference>
<dbReference type="Gene3D" id="1.20.120.1850">
    <property type="entry name" value="Ebh helix bundles repeating unit (S and A modules)"/>
    <property type="match status" value="6"/>
</dbReference>
<dbReference type="Gene3D" id="1.20.5.420">
    <property type="entry name" value="Immunoglobulin FC, subunit C"/>
    <property type="match status" value="80"/>
</dbReference>
<dbReference type="InterPro" id="IPR011439">
    <property type="entry name" value="DUF1542"/>
</dbReference>
<dbReference type="InterPro" id="IPR051197">
    <property type="entry name" value="ECM-binding_protein"/>
</dbReference>
<dbReference type="InterPro" id="IPR020840">
    <property type="entry name" value="Extracell_matrix-bd_GA"/>
</dbReference>
<dbReference type="InterPro" id="IPR002988">
    <property type="entry name" value="GA_module"/>
</dbReference>
<dbReference type="InterPro" id="IPR009063">
    <property type="entry name" value="Ig/albumin-bd_sf"/>
</dbReference>
<dbReference type="PANTHER" id="PTHR33150">
    <property type="entry name" value="EXTRACELLULAR MATRIX-BINDING PROTEIN EBH"/>
    <property type="match status" value="1"/>
</dbReference>
<dbReference type="PANTHER" id="PTHR33150:SF1">
    <property type="entry name" value="EXTRACELLULAR MATRIX-BINDING PROTEIN EBH"/>
    <property type="match status" value="1"/>
</dbReference>
<dbReference type="Pfam" id="PF07564">
    <property type="entry name" value="DUF1542"/>
    <property type="match status" value="8"/>
</dbReference>
<dbReference type="Pfam" id="PF07554">
    <property type="entry name" value="FIVAR"/>
    <property type="match status" value="39"/>
</dbReference>
<dbReference type="Pfam" id="PF01468">
    <property type="entry name" value="GA"/>
    <property type="match status" value="11"/>
</dbReference>
<dbReference type="SMART" id="SM00844">
    <property type="entry name" value="GA"/>
    <property type="match status" value="46"/>
</dbReference>
<dbReference type="SUPFAM" id="SSF46997">
    <property type="entry name" value="Bacterial immunoglobulin/albumin-binding domains"/>
    <property type="match status" value="91"/>
</dbReference>
<organism>
    <name type="scientific">Staphylococcus aureus (strain N315)</name>
    <dbReference type="NCBI Taxonomy" id="158879"/>
    <lineage>
        <taxon>Bacteria</taxon>
        <taxon>Bacillati</taxon>
        <taxon>Bacillota</taxon>
        <taxon>Bacilli</taxon>
        <taxon>Bacillales</taxon>
        <taxon>Staphylococcaceae</taxon>
        <taxon>Staphylococcus</taxon>
    </lineage>
</organism>
<accession>Q99U54</accession>
<proteinExistence type="predicted"/>
<gene>
    <name type="primary">ebhA</name>
    <name type="ordered locus">SA1267</name>
</gene>
<evidence type="ECO:0000255" key="1"/>
<evidence type="ECO:0000256" key="2">
    <source>
        <dbReference type="SAM" id="MobiDB-lite"/>
    </source>
</evidence>
<evidence type="ECO:0000305" key="3"/>
<keyword id="KW-1003">Cell membrane</keyword>
<keyword id="KW-0472">Membrane</keyword>
<keyword id="KW-0677">Repeat</keyword>
<keyword id="KW-0812">Transmembrane</keyword>
<keyword id="KW-1133">Transmembrane helix</keyword>
<protein>
    <recommendedName>
        <fullName>Extracellular matrix-binding protein EbhA</fullName>
    </recommendedName>
    <alternativeName>
        <fullName>ECM-binding protein homolog A</fullName>
    </alternativeName>
</protein>